<evidence type="ECO:0000250" key="1">
    <source>
        <dbReference type="UniProtKB" id="P83731"/>
    </source>
</evidence>
<evidence type="ECO:0000256" key="2">
    <source>
        <dbReference type="SAM" id="MobiDB-lite"/>
    </source>
</evidence>
<evidence type="ECO:0000269" key="3">
    <source>
    </source>
</evidence>
<evidence type="ECO:0000305" key="4"/>
<evidence type="ECO:0007744" key="5">
    <source>
        <dbReference type="PDB" id="7CPU"/>
    </source>
</evidence>
<evidence type="ECO:0007744" key="6">
    <source>
        <dbReference type="PDB" id="7CPV"/>
    </source>
</evidence>
<evidence type="ECO:0007744" key="7">
    <source>
    </source>
</evidence>
<evidence type="ECO:0007744" key="8">
    <source>
    </source>
</evidence>
<sequence length="157" mass="17779">MKVELCSFSGYKIYPGHGRRYARTDGKVFQFLNAKCESAFLSKRNPRQINWTVLYRRKHKKGQSEEIQKKRTRRAVKFQRAITGASLADIMAKRNQKPEVRKAQREQAIRAAKEAKKAKQASKKTAMAAAKAPTKAAPKQKIVKPVKVSAPRVGGKR</sequence>
<feature type="chain" id="PRO_0000136869" description="Large ribosomal subunit protein eL24">
    <location>
        <begin position="1"/>
        <end position="157"/>
    </location>
</feature>
<feature type="region of interest" description="Disordered" evidence="2">
    <location>
        <begin position="106"/>
        <end position="157"/>
    </location>
</feature>
<feature type="compositionally biased region" description="Basic and acidic residues" evidence="2">
    <location>
        <begin position="106"/>
        <end position="117"/>
    </location>
</feature>
<feature type="compositionally biased region" description="Low complexity" evidence="2">
    <location>
        <begin position="123"/>
        <end position="140"/>
    </location>
</feature>
<feature type="modified residue" description="ADP-ribosyl glutamic acid" evidence="1">
    <location>
        <position position="4"/>
    </location>
</feature>
<feature type="modified residue" description="N6-acetyllysine; alternate" evidence="8">
    <location>
        <position position="27"/>
    </location>
</feature>
<feature type="modified residue" description="N6-acetyllysine" evidence="1">
    <location>
        <position position="77"/>
    </location>
</feature>
<feature type="modified residue" description="Phosphothreonine" evidence="7">
    <location>
        <position position="83"/>
    </location>
</feature>
<feature type="modified residue" description="Phosphoserine" evidence="7">
    <location>
        <position position="86"/>
    </location>
</feature>
<feature type="modified residue" description="N6-acetyllysine" evidence="1">
    <location>
        <position position="93"/>
    </location>
</feature>
<feature type="modified residue" description="N6-succinyllysine" evidence="8">
    <location>
        <position position="131"/>
    </location>
</feature>
<feature type="modified residue" description="Phosphoserine" evidence="1">
    <location>
        <position position="149"/>
    </location>
</feature>
<feature type="cross-link" description="Glycyl lysine isopeptide (Lys-Gly) (interchain with G-Cter in SUMO2)" evidence="1">
    <location>
        <position position="2"/>
    </location>
</feature>
<feature type="cross-link" description="Glycyl lysine isopeptide (Lys-Gly) (interchain with G-Cter in SUMO2); alternate" evidence="1">
    <location>
        <position position="27"/>
    </location>
</feature>
<feature type="cross-link" description="Glycyl lysine isopeptide (Lys-Gly) (interchain with G-Cter in SUMO2)" evidence="1">
    <location>
        <position position="35"/>
    </location>
</feature>
<feature type="cross-link" description="Glycyl lysine isopeptide (Lys-Gly) (interchain with G-Cter in SUMO2)" evidence="1">
    <location>
        <position position="147"/>
    </location>
</feature>
<feature type="sequence conflict" description="In Ref. 1; BAC36903." evidence="4" ref="1">
    <original>Y</original>
    <variation>N</variation>
    <location>
        <position position="14"/>
    </location>
</feature>
<dbReference type="EMBL" id="AK018731">
    <property type="protein sequence ID" value="BAB31374.1"/>
    <property type="molecule type" value="mRNA"/>
</dbReference>
<dbReference type="EMBL" id="AK077617">
    <property type="protein sequence ID" value="BAC36903.1"/>
    <property type="molecule type" value="mRNA"/>
</dbReference>
<dbReference type="EMBL" id="BC002110">
    <property type="protein sequence ID" value="AAH02110.2"/>
    <property type="status" value="ALT_INIT"/>
    <property type="molecule type" value="mRNA"/>
</dbReference>
<dbReference type="EMBL" id="BC053377">
    <property type="protein sequence ID" value="AAH53377.1"/>
    <property type="molecule type" value="mRNA"/>
</dbReference>
<dbReference type="EMBL" id="BC058114">
    <property type="protein sequence ID" value="AAH58114.1"/>
    <property type="molecule type" value="mRNA"/>
</dbReference>
<dbReference type="EMBL" id="BC092008">
    <property type="protein sequence ID" value="AAH92008.1"/>
    <property type="molecule type" value="mRNA"/>
</dbReference>
<dbReference type="CCDS" id="CCDS28218.1"/>
<dbReference type="RefSeq" id="NP_077180.1">
    <property type="nucleotide sequence ID" value="NM_024218.4"/>
</dbReference>
<dbReference type="PDB" id="6SWA">
    <property type="method" value="EM"/>
    <property type="resolution" value="3.10 A"/>
    <property type="chains" value="U=1-157"/>
</dbReference>
<dbReference type="PDB" id="7CPU">
    <property type="method" value="EM"/>
    <property type="resolution" value="2.82 A"/>
    <property type="chains" value="LW=1-157"/>
</dbReference>
<dbReference type="PDB" id="7CPV">
    <property type="method" value="EM"/>
    <property type="resolution" value="3.03 A"/>
    <property type="chains" value="LW=1-157"/>
</dbReference>
<dbReference type="PDB" id="7LS1">
    <property type="method" value="EM"/>
    <property type="resolution" value="3.30 A"/>
    <property type="chains" value="Q2=1-157"/>
</dbReference>
<dbReference type="PDB" id="7LS2">
    <property type="method" value="EM"/>
    <property type="resolution" value="3.10 A"/>
    <property type="chains" value="Q2=1-157"/>
</dbReference>
<dbReference type="PDBsum" id="6SWA"/>
<dbReference type="PDBsum" id="7CPU"/>
<dbReference type="PDBsum" id="7CPV"/>
<dbReference type="PDBsum" id="7LS1"/>
<dbReference type="PDBsum" id="7LS2"/>
<dbReference type="EMDB" id="EMD-10321"/>
<dbReference type="EMDB" id="EMD-23500"/>
<dbReference type="EMDB" id="EMD-23501"/>
<dbReference type="EMDB" id="EMD-30432"/>
<dbReference type="EMDB" id="EMD-30433"/>
<dbReference type="SMR" id="Q8BP67"/>
<dbReference type="BioGRID" id="212718">
    <property type="interactions" value="92"/>
</dbReference>
<dbReference type="ComplexPortal" id="CPX-5262">
    <property type="entry name" value="60S cytosolic large ribosomal subunit"/>
</dbReference>
<dbReference type="ComplexPortal" id="CPX-7662">
    <property type="entry name" value="60S cytosolic large ribosomal subunit, testis-specific variant"/>
</dbReference>
<dbReference type="ComplexPortal" id="CPX-7663">
    <property type="entry name" value="60S cytosolic large ribosomal subunit, striated muscle variant"/>
</dbReference>
<dbReference type="FunCoup" id="Q8BP67">
    <property type="interactions" value="2428"/>
</dbReference>
<dbReference type="IntAct" id="Q8BP67">
    <property type="interactions" value="5"/>
</dbReference>
<dbReference type="MINT" id="Q8BP67"/>
<dbReference type="STRING" id="10090.ENSMUSP00000023269"/>
<dbReference type="GlyGen" id="Q8BP67">
    <property type="glycosylation" value="1 site, 1 O-linked glycan (1 site)"/>
</dbReference>
<dbReference type="iPTMnet" id="Q8BP67"/>
<dbReference type="MetOSite" id="Q8BP67"/>
<dbReference type="PhosphoSitePlus" id="Q8BP67"/>
<dbReference type="SwissPalm" id="Q8BP67"/>
<dbReference type="jPOST" id="Q8BP67"/>
<dbReference type="PaxDb" id="10090-ENSMUSP00000023269"/>
<dbReference type="PeptideAtlas" id="Q8BP67"/>
<dbReference type="ProteomicsDB" id="255018"/>
<dbReference type="Pumba" id="Q8BP67"/>
<dbReference type="TopDownProteomics" id="Q8BP67"/>
<dbReference type="Antibodypedia" id="32294">
    <property type="antibodies" value="79 antibodies from 24 providers"/>
</dbReference>
<dbReference type="DNASU" id="68193"/>
<dbReference type="Ensembl" id="ENSMUST00000023269.5">
    <property type="protein sequence ID" value="ENSMUSP00000023269.5"/>
    <property type="gene ID" value="ENSMUSG00000098274.8"/>
</dbReference>
<dbReference type="GeneID" id="68193"/>
<dbReference type="KEGG" id="mmu:68193"/>
<dbReference type="UCSC" id="uc007zlv.2">
    <property type="organism name" value="mouse"/>
</dbReference>
<dbReference type="AGR" id="MGI:1915443"/>
<dbReference type="CTD" id="6152"/>
<dbReference type="MGI" id="MGI:1915443">
    <property type="gene designation" value="Rpl24"/>
</dbReference>
<dbReference type="VEuPathDB" id="HostDB:ENSMUSG00000098274"/>
<dbReference type="eggNOG" id="KOG1722">
    <property type="taxonomic scope" value="Eukaryota"/>
</dbReference>
<dbReference type="GeneTree" id="ENSGT00950000183105"/>
<dbReference type="HOGENOM" id="CLU_106411_1_0_1"/>
<dbReference type="InParanoid" id="Q8BP67"/>
<dbReference type="OMA" id="PGHGKKM"/>
<dbReference type="OrthoDB" id="1727108at2759"/>
<dbReference type="PhylomeDB" id="Q8BP67"/>
<dbReference type="TreeFam" id="TF312933"/>
<dbReference type="Reactome" id="R-MMU-156827">
    <property type="pathway name" value="L13a-mediated translational silencing of Ceruloplasmin expression"/>
</dbReference>
<dbReference type="Reactome" id="R-MMU-1799339">
    <property type="pathway name" value="SRP-dependent cotranslational protein targeting to membrane"/>
</dbReference>
<dbReference type="Reactome" id="R-MMU-6791226">
    <property type="pathway name" value="Major pathway of rRNA processing in the nucleolus and cytosol"/>
</dbReference>
<dbReference type="Reactome" id="R-MMU-72689">
    <property type="pathway name" value="Formation of a pool of free 40S subunits"/>
</dbReference>
<dbReference type="Reactome" id="R-MMU-72706">
    <property type="pathway name" value="GTP hydrolysis and joining of the 60S ribosomal subunit"/>
</dbReference>
<dbReference type="Reactome" id="R-MMU-975956">
    <property type="pathway name" value="Nonsense Mediated Decay (NMD) independent of the Exon Junction Complex (EJC)"/>
</dbReference>
<dbReference type="Reactome" id="R-MMU-975957">
    <property type="pathway name" value="Nonsense Mediated Decay (NMD) enhanced by the Exon Junction Complex (EJC)"/>
</dbReference>
<dbReference type="BioGRID-ORCS" id="68193">
    <property type="hits" value="27 hits in 75 CRISPR screens"/>
</dbReference>
<dbReference type="CD-CODE" id="DE1E139C">
    <property type="entry name" value="Chromatoid body"/>
</dbReference>
<dbReference type="ChiTaRS" id="Rpl24">
    <property type="organism name" value="mouse"/>
</dbReference>
<dbReference type="PRO" id="PR:Q8BP67"/>
<dbReference type="Proteomes" id="UP000000589">
    <property type="component" value="Chromosome 16"/>
</dbReference>
<dbReference type="RNAct" id="Q8BP67">
    <property type="molecule type" value="protein"/>
</dbReference>
<dbReference type="Bgee" id="ENSMUSG00000098274">
    <property type="expression patterns" value="Expressed in epiblast cell in embryo and 76 other cell types or tissues"/>
</dbReference>
<dbReference type="GO" id="GO:0005737">
    <property type="term" value="C:cytoplasm"/>
    <property type="evidence" value="ECO:0000314"/>
    <property type="project" value="ComplexPortal"/>
</dbReference>
<dbReference type="GO" id="GO:0005829">
    <property type="term" value="C:cytosol"/>
    <property type="evidence" value="ECO:0000304"/>
    <property type="project" value="Reactome"/>
</dbReference>
<dbReference type="GO" id="GO:0022625">
    <property type="term" value="C:cytosolic large ribosomal subunit"/>
    <property type="evidence" value="ECO:0000314"/>
    <property type="project" value="UniProtKB"/>
</dbReference>
<dbReference type="GO" id="GO:0005783">
    <property type="term" value="C:endoplasmic reticulum"/>
    <property type="evidence" value="ECO:0007669"/>
    <property type="project" value="Ensembl"/>
</dbReference>
<dbReference type="GO" id="GO:0098794">
    <property type="term" value="C:postsynapse"/>
    <property type="evidence" value="ECO:0000303"/>
    <property type="project" value="SynGO"/>
</dbReference>
<dbReference type="GO" id="GO:0098793">
    <property type="term" value="C:presynapse"/>
    <property type="evidence" value="ECO:0000303"/>
    <property type="project" value="SynGO"/>
</dbReference>
<dbReference type="GO" id="GO:0005840">
    <property type="term" value="C:ribosome"/>
    <property type="evidence" value="ECO:0000303"/>
    <property type="project" value="SynGO"/>
</dbReference>
<dbReference type="GO" id="GO:0045202">
    <property type="term" value="C:synapse"/>
    <property type="evidence" value="ECO:0000314"/>
    <property type="project" value="SynGO"/>
</dbReference>
<dbReference type="GO" id="GO:0003735">
    <property type="term" value="F:structural constituent of ribosome"/>
    <property type="evidence" value="ECO:0000314"/>
    <property type="project" value="UniProtKB"/>
</dbReference>
<dbReference type="GO" id="GO:0002181">
    <property type="term" value="P:cytoplasmic translation"/>
    <property type="evidence" value="ECO:0000250"/>
    <property type="project" value="UniProtKB"/>
</dbReference>
<dbReference type="GO" id="GO:0010458">
    <property type="term" value="P:exit from mitosis"/>
    <property type="evidence" value="ECO:0000315"/>
    <property type="project" value="MGI"/>
</dbReference>
<dbReference type="GO" id="GO:0021554">
    <property type="term" value="P:optic nerve development"/>
    <property type="evidence" value="ECO:0000315"/>
    <property type="project" value="MGI"/>
</dbReference>
<dbReference type="GO" id="GO:0060041">
    <property type="term" value="P:retina development in camera-type eye"/>
    <property type="evidence" value="ECO:0000315"/>
    <property type="project" value="MGI"/>
</dbReference>
<dbReference type="GO" id="GO:0031290">
    <property type="term" value="P:retinal ganglion cell axon guidance"/>
    <property type="evidence" value="ECO:0000315"/>
    <property type="project" value="MGI"/>
</dbReference>
<dbReference type="GO" id="GO:0000027">
    <property type="term" value="P:ribosomal large subunit assembly"/>
    <property type="evidence" value="ECO:0000315"/>
    <property type="project" value="MGI"/>
</dbReference>
<dbReference type="GO" id="GO:0006412">
    <property type="term" value="P:translation"/>
    <property type="evidence" value="ECO:0000315"/>
    <property type="project" value="MGI"/>
</dbReference>
<dbReference type="GO" id="GO:0140242">
    <property type="term" value="P:translation at postsynapse"/>
    <property type="evidence" value="ECO:0000303"/>
    <property type="project" value="SynGO"/>
</dbReference>
<dbReference type="GO" id="GO:0140236">
    <property type="term" value="P:translation at presynapse"/>
    <property type="evidence" value="ECO:0000303"/>
    <property type="project" value="SynGO"/>
</dbReference>
<dbReference type="CDD" id="cd00472">
    <property type="entry name" value="Ribosomal_L24e_L24"/>
    <property type="match status" value="1"/>
</dbReference>
<dbReference type="FunFam" id="2.30.170.20:FF:000004">
    <property type="entry name" value="60S ribosomal protein l24"/>
    <property type="match status" value="1"/>
</dbReference>
<dbReference type="Gene3D" id="6.10.250.1270">
    <property type="match status" value="1"/>
</dbReference>
<dbReference type="Gene3D" id="2.30.170.20">
    <property type="entry name" value="Ribosomal protein L24e"/>
    <property type="match status" value="1"/>
</dbReference>
<dbReference type="InterPro" id="IPR038630">
    <property type="entry name" value="L24e/L24_sf"/>
</dbReference>
<dbReference type="InterPro" id="IPR056366">
    <property type="entry name" value="Ribosomal_eL24"/>
</dbReference>
<dbReference type="InterPro" id="IPR000988">
    <property type="entry name" value="Ribosomal_eL24-rel_N"/>
</dbReference>
<dbReference type="InterPro" id="IPR023442">
    <property type="entry name" value="Ribosomal_eL24_CS"/>
</dbReference>
<dbReference type="InterPro" id="IPR011017">
    <property type="entry name" value="TRASH_dom"/>
</dbReference>
<dbReference type="PANTHER" id="PTHR10792">
    <property type="entry name" value="60S RIBOSOMAL PROTEIN L24"/>
    <property type="match status" value="1"/>
</dbReference>
<dbReference type="PANTHER" id="PTHR10792:SF1">
    <property type="entry name" value="RIBOSOMAL PROTEIN L24"/>
    <property type="match status" value="1"/>
</dbReference>
<dbReference type="Pfam" id="PF01246">
    <property type="entry name" value="Ribosomal_L24e"/>
    <property type="match status" value="1"/>
</dbReference>
<dbReference type="SMART" id="SM00746">
    <property type="entry name" value="TRASH"/>
    <property type="match status" value="1"/>
</dbReference>
<dbReference type="SUPFAM" id="SSF57716">
    <property type="entry name" value="Glucocorticoid receptor-like (DNA-binding domain)"/>
    <property type="match status" value="1"/>
</dbReference>
<dbReference type="PROSITE" id="PS01073">
    <property type="entry name" value="RIBOSOMAL_L24E"/>
    <property type="match status" value="1"/>
</dbReference>
<proteinExistence type="evidence at protein level"/>
<comment type="function">
    <text evidence="3">Component of the large ribosomal subunit (PubMed:36517592). The ribosome is a large ribonucleoprotein complex responsible for the synthesis of proteins in the cell (PubMed:36517592).</text>
</comment>
<comment type="subunit">
    <text evidence="3">Component of the large ribosomal subunit.</text>
</comment>
<comment type="subcellular location">
    <subcellularLocation>
        <location evidence="3">Cytoplasm</location>
    </subcellularLocation>
</comment>
<comment type="PTM">
    <text evidence="1">Mono-ADP-ribosylation at Glu-4 by PARP16 inhibits polysome assembly and mRNA loading, thereby inhibiting protein translation.</text>
</comment>
<comment type="similarity">
    <text evidence="4">Belongs to the eukaryotic ribosomal protein eL24 family.</text>
</comment>
<comment type="sequence caution" evidence="4">
    <conflict type="erroneous initiation">
        <sequence resource="EMBL-CDS" id="AAH02110"/>
    </conflict>
</comment>
<organism>
    <name type="scientific">Mus musculus</name>
    <name type="common">Mouse</name>
    <dbReference type="NCBI Taxonomy" id="10090"/>
    <lineage>
        <taxon>Eukaryota</taxon>
        <taxon>Metazoa</taxon>
        <taxon>Chordata</taxon>
        <taxon>Craniata</taxon>
        <taxon>Vertebrata</taxon>
        <taxon>Euteleostomi</taxon>
        <taxon>Mammalia</taxon>
        <taxon>Eutheria</taxon>
        <taxon>Euarchontoglires</taxon>
        <taxon>Glires</taxon>
        <taxon>Rodentia</taxon>
        <taxon>Myomorpha</taxon>
        <taxon>Muroidea</taxon>
        <taxon>Muridae</taxon>
        <taxon>Murinae</taxon>
        <taxon>Mus</taxon>
        <taxon>Mus</taxon>
    </lineage>
</organism>
<protein>
    <recommendedName>
        <fullName evidence="4">Large ribosomal subunit protein eL24</fullName>
    </recommendedName>
    <alternativeName>
        <fullName>60S ribosomal protein L24</fullName>
    </alternativeName>
</protein>
<gene>
    <name type="primary">Rpl24</name>
</gene>
<accession>Q8BP67</accession>
<accession>P38663</accession>
<accession>Q58EA4</accession>
<reference key="1">
    <citation type="journal article" date="2005" name="Science">
        <title>The transcriptional landscape of the mammalian genome.</title>
        <authorList>
            <person name="Carninci P."/>
            <person name="Kasukawa T."/>
            <person name="Katayama S."/>
            <person name="Gough J."/>
            <person name="Frith M.C."/>
            <person name="Maeda N."/>
            <person name="Oyama R."/>
            <person name="Ravasi T."/>
            <person name="Lenhard B."/>
            <person name="Wells C."/>
            <person name="Kodzius R."/>
            <person name="Shimokawa K."/>
            <person name="Bajic V.B."/>
            <person name="Brenner S.E."/>
            <person name="Batalov S."/>
            <person name="Forrest A.R."/>
            <person name="Zavolan M."/>
            <person name="Davis M.J."/>
            <person name="Wilming L.G."/>
            <person name="Aidinis V."/>
            <person name="Allen J.E."/>
            <person name="Ambesi-Impiombato A."/>
            <person name="Apweiler R."/>
            <person name="Aturaliya R.N."/>
            <person name="Bailey T.L."/>
            <person name="Bansal M."/>
            <person name="Baxter L."/>
            <person name="Beisel K.W."/>
            <person name="Bersano T."/>
            <person name="Bono H."/>
            <person name="Chalk A.M."/>
            <person name="Chiu K.P."/>
            <person name="Choudhary V."/>
            <person name="Christoffels A."/>
            <person name="Clutterbuck D.R."/>
            <person name="Crowe M.L."/>
            <person name="Dalla E."/>
            <person name="Dalrymple B.P."/>
            <person name="de Bono B."/>
            <person name="Della Gatta G."/>
            <person name="di Bernardo D."/>
            <person name="Down T."/>
            <person name="Engstrom P."/>
            <person name="Fagiolini M."/>
            <person name="Faulkner G."/>
            <person name="Fletcher C.F."/>
            <person name="Fukushima T."/>
            <person name="Furuno M."/>
            <person name="Futaki S."/>
            <person name="Gariboldi M."/>
            <person name="Georgii-Hemming P."/>
            <person name="Gingeras T.R."/>
            <person name="Gojobori T."/>
            <person name="Green R.E."/>
            <person name="Gustincich S."/>
            <person name="Harbers M."/>
            <person name="Hayashi Y."/>
            <person name="Hensch T.K."/>
            <person name="Hirokawa N."/>
            <person name="Hill D."/>
            <person name="Huminiecki L."/>
            <person name="Iacono M."/>
            <person name="Ikeo K."/>
            <person name="Iwama A."/>
            <person name="Ishikawa T."/>
            <person name="Jakt M."/>
            <person name="Kanapin A."/>
            <person name="Katoh M."/>
            <person name="Kawasawa Y."/>
            <person name="Kelso J."/>
            <person name="Kitamura H."/>
            <person name="Kitano H."/>
            <person name="Kollias G."/>
            <person name="Krishnan S.P."/>
            <person name="Kruger A."/>
            <person name="Kummerfeld S.K."/>
            <person name="Kurochkin I.V."/>
            <person name="Lareau L.F."/>
            <person name="Lazarevic D."/>
            <person name="Lipovich L."/>
            <person name="Liu J."/>
            <person name="Liuni S."/>
            <person name="McWilliam S."/>
            <person name="Madan Babu M."/>
            <person name="Madera M."/>
            <person name="Marchionni L."/>
            <person name="Matsuda H."/>
            <person name="Matsuzawa S."/>
            <person name="Miki H."/>
            <person name="Mignone F."/>
            <person name="Miyake S."/>
            <person name="Morris K."/>
            <person name="Mottagui-Tabar S."/>
            <person name="Mulder N."/>
            <person name="Nakano N."/>
            <person name="Nakauchi H."/>
            <person name="Ng P."/>
            <person name="Nilsson R."/>
            <person name="Nishiguchi S."/>
            <person name="Nishikawa S."/>
            <person name="Nori F."/>
            <person name="Ohara O."/>
            <person name="Okazaki Y."/>
            <person name="Orlando V."/>
            <person name="Pang K.C."/>
            <person name="Pavan W.J."/>
            <person name="Pavesi G."/>
            <person name="Pesole G."/>
            <person name="Petrovsky N."/>
            <person name="Piazza S."/>
            <person name="Reed J."/>
            <person name="Reid J.F."/>
            <person name="Ring B.Z."/>
            <person name="Ringwald M."/>
            <person name="Rost B."/>
            <person name="Ruan Y."/>
            <person name="Salzberg S.L."/>
            <person name="Sandelin A."/>
            <person name="Schneider C."/>
            <person name="Schoenbach C."/>
            <person name="Sekiguchi K."/>
            <person name="Semple C.A."/>
            <person name="Seno S."/>
            <person name="Sessa L."/>
            <person name="Sheng Y."/>
            <person name="Shibata Y."/>
            <person name="Shimada H."/>
            <person name="Shimada K."/>
            <person name="Silva D."/>
            <person name="Sinclair B."/>
            <person name="Sperling S."/>
            <person name="Stupka E."/>
            <person name="Sugiura K."/>
            <person name="Sultana R."/>
            <person name="Takenaka Y."/>
            <person name="Taki K."/>
            <person name="Tammoja K."/>
            <person name="Tan S.L."/>
            <person name="Tang S."/>
            <person name="Taylor M.S."/>
            <person name="Tegner J."/>
            <person name="Teichmann S.A."/>
            <person name="Ueda H.R."/>
            <person name="van Nimwegen E."/>
            <person name="Verardo R."/>
            <person name="Wei C.L."/>
            <person name="Yagi K."/>
            <person name="Yamanishi H."/>
            <person name="Zabarovsky E."/>
            <person name="Zhu S."/>
            <person name="Zimmer A."/>
            <person name="Hide W."/>
            <person name="Bult C."/>
            <person name="Grimmond S.M."/>
            <person name="Teasdale R.D."/>
            <person name="Liu E.T."/>
            <person name="Brusic V."/>
            <person name="Quackenbush J."/>
            <person name="Wahlestedt C."/>
            <person name="Mattick J.S."/>
            <person name="Hume D.A."/>
            <person name="Kai C."/>
            <person name="Sasaki D."/>
            <person name="Tomaru Y."/>
            <person name="Fukuda S."/>
            <person name="Kanamori-Katayama M."/>
            <person name="Suzuki M."/>
            <person name="Aoki J."/>
            <person name="Arakawa T."/>
            <person name="Iida J."/>
            <person name="Imamura K."/>
            <person name="Itoh M."/>
            <person name="Kato T."/>
            <person name="Kawaji H."/>
            <person name="Kawagashira N."/>
            <person name="Kawashima T."/>
            <person name="Kojima M."/>
            <person name="Kondo S."/>
            <person name="Konno H."/>
            <person name="Nakano K."/>
            <person name="Ninomiya N."/>
            <person name="Nishio T."/>
            <person name="Okada M."/>
            <person name="Plessy C."/>
            <person name="Shibata K."/>
            <person name="Shiraki T."/>
            <person name="Suzuki S."/>
            <person name="Tagami M."/>
            <person name="Waki K."/>
            <person name="Watahiki A."/>
            <person name="Okamura-Oho Y."/>
            <person name="Suzuki H."/>
            <person name="Kawai J."/>
            <person name="Hayashizaki Y."/>
        </authorList>
    </citation>
    <scope>NUCLEOTIDE SEQUENCE [LARGE SCALE MRNA]</scope>
    <source>
        <strain>C57BL/6J</strain>
        <tissue>Embryo</tissue>
        <tissue>Kidney</tissue>
    </source>
</reference>
<reference key="2">
    <citation type="journal article" date="2004" name="Genome Res.">
        <title>The status, quality, and expansion of the NIH full-length cDNA project: the Mammalian Gene Collection (MGC).</title>
        <authorList>
            <consortium name="The MGC Project Team"/>
        </authorList>
    </citation>
    <scope>NUCLEOTIDE SEQUENCE [LARGE SCALE MRNA]</scope>
    <source>
        <strain>C57BL/6J</strain>
        <strain>FVB/N</strain>
        <tissue>Brain</tissue>
        <tissue>Colon</tissue>
        <tissue>Eye</tissue>
        <tissue>Mammary gland</tissue>
    </source>
</reference>
<reference key="3">
    <citation type="journal article" date="2010" name="Cell">
        <title>A tissue-specific atlas of mouse protein phosphorylation and expression.</title>
        <authorList>
            <person name="Huttlin E.L."/>
            <person name="Jedrychowski M.P."/>
            <person name="Elias J.E."/>
            <person name="Goswami T."/>
            <person name="Rad R."/>
            <person name="Beausoleil S.A."/>
            <person name="Villen J."/>
            <person name="Haas W."/>
            <person name="Sowa M.E."/>
            <person name="Gygi S.P."/>
        </authorList>
    </citation>
    <scope>PHOSPHORYLATION [LARGE SCALE ANALYSIS] AT THR-83 AND SER-86</scope>
    <scope>IDENTIFICATION BY MASS SPECTROMETRY [LARGE SCALE ANALYSIS]</scope>
    <source>
        <tissue>Brain</tissue>
        <tissue>Brown adipose tissue</tissue>
        <tissue>Kidney</tissue>
        <tissue>Liver</tissue>
        <tissue>Lung</tissue>
        <tissue>Pancreas</tissue>
        <tissue>Spleen</tissue>
        <tissue>Testis</tissue>
    </source>
</reference>
<reference key="4">
    <citation type="journal article" date="2013" name="Mol. Cell">
        <title>SIRT5-mediated lysine desuccinylation impacts diverse metabolic pathways.</title>
        <authorList>
            <person name="Park J."/>
            <person name="Chen Y."/>
            <person name="Tishkoff D.X."/>
            <person name="Peng C."/>
            <person name="Tan M."/>
            <person name="Dai L."/>
            <person name="Xie Z."/>
            <person name="Zhang Y."/>
            <person name="Zwaans B.M."/>
            <person name="Skinner M.E."/>
            <person name="Lombard D.B."/>
            <person name="Zhao Y."/>
        </authorList>
    </citation>
    <scope>ACETYLATION [LARGE SCALE ANALYSIS] AT LYS-27</scope>
    <scope>SUCCINYLATION [LARGE SCALE ANALYSIS] AT LYS-131</scope>
    <scope>IDENTIFICATION BY MASS SPECTROMETRY [LARGE SCALE ANALYSIS]</scope>
    <source>
        <tissue>Embryonic fibroblast</tissue>
    </source>
</reference>
<reference evidence="5 6" key="5">
    <citation type="journal article" date="2022" name="Nature">
        <title>A male germ-cell-specific ribosome controls male fertility.</title>
        <authorList>
            <person name="Li H."/>
            <person name="Huo Y."/>
            <person name="He X."/>
            <person name="Yao L."/>
            <person name="Zhang H."/>
            <person name="Cui Y."/>
            <person name="Xiao H."/>
            <person name="Xie W."/>
            <person name="Zhang D."/>
            <person name="Wang Y."/>
            <person name="Zhang S."/>
            <person name="Tu H."/>
            <person name="Cheng Y."/>
            <person name="Guo Y."/>
            <person name="Cao X."/>
            <person name="Zhu Y."/>
            <person name="Jiang T."/>
            <person name="Guo X."/>
            <person name="Qin Y."/>
            <person name="Sha J."/>
        </authorList>
    </citation>
    <scope>STRUCTURE BY ELECTRON MICROSCOPY (3.03 ANGSTROMS) OF RIBOSOME</scope>
    <scope>FUNCTION</scope>
    <scope>SUBUNIT</scope>
    <scope>SUBCELLULAR LOCATION</scope>
</reference>
<name>RL24_MOUSE</name>
<keyword id="KW-0002">3D-structure</keyword>
<keyword id="KW-0007">Acetylation</keyword>
<keyword id="KW-0013">ADP-ribosylation</keyword>
<keyword id="KW-0963">Cytoplasm</keyword>
<keyword id="KW-1017">Isopeptide bond</keyword>
<keyword id="KW-0597">Phosphoprotein</keyword>
<keyword id="KW-1185">Reference proteome</keyword>
<keyword id="KW-0687">Ribonucleoprotein</keyword>
<keyword id="KW-0689">Ribosomal protein</keyword>
<keyword id="KW-0832">Ubl conjugation</keyword>